<accession>Q9KSN0</accession>
<feature type="chain" id="PRO_0000220133" description="Thiopurine S-methyltransferase">
    <location>
        <begin position="1"/>
        <end position="218"/>
    </location>
</feature>
<feature type="binding site" evidence="1">
    <location>
        <position position="11"/>
    </location>
    <ligand>
        <name>S-adenosyl-L-methionine</name>
        <dbReference type="ChEBI" id="CHEBI:59789"/>
    </ligand>
</feature>
<feature type="binding site" evidence="1">
    <location>
        <position position="46"/>
    </location>
    <ligand>
        <name>S-adenosyl-L-methionine</name>
        <dbReference type="ChEBI" id="CHEBI:59789"/>
    </ligand>
</feature>
<feature type="binding site" evidence="1">
    <location>
        <position position="67"/>
    </location>
    <ligand>
        <name>S-adenosyl-L-methionine</name>
        <dbReference type="ChEBI" id="CHEBI:59789"/>
    </ligand>
</feature>
<feature type="binding site" evidence="1">
    <location>
        <position position="122"/>
    </location>
    <ligand>
        <name>S-adenosyl-L-methionine</name>
        <dbReference type="ChEBI" id="CHEBI:59789"/>
    </ligand>
</feature>
<sequence>MRDPEFWHNKWAANQIGFHLEDVNPLLIRFWSDLAPKRSEKVLVPLCGKSEDLIWLANQHDSVQGVELSQIAVRSFFAEHFYTPTVTRLNAQHELYQFDELTLFTGDFFTAPVESVDLVYDRAALVALPEEMRAEYAQRVLQLLKPGGRILLVSMDYVQTELSGPPFSVPEAEIRTLFMGCEVRRVYQDTSIDPHLNKRTQAGLSRFAEEVWVIEKSE</sequence>
<evidence type="ECO:0000255" key="1">
    <source>
        <dbReference type="HAMAP-Rule" id="MF_00812"/>
    </source>
</evidence>
<organism>
    <name type="scientific">Vibrio cholerae serotype O1 (strain ATCC 39315 / El Tor Inaba N16961)</name>
    <dbReference type="NCBI Taxonomy" id="243277"/>
    <lineage>
        <taxon>Bacteria</taxon>
        <taxon>Pseudomonadati</taxon>
        <taxon>Pseudomonadota</taxon>
        <taxon>Gammaproteobacteria</taxon>
        <taxon>Vibrionales</taxon>
        <taxon>Vibrionaceae</taxon>
        <taxon>Vibrio</taxon>
    </lineage>
</organism>
<dbReference type="EC" id="2.1.1.67" evidence="1"/>
<dbReference type="EMBL" id="AE003852">
    <property type="protein sequence ID" value="AAF94385.1"/>
    <property type="molecule type" value="Genomic_DNA"/>
</dbReference>
<dbReference type="PIR" id="B82226">
    <property type="entry name" value="B82226"/>
</dbReference>
<dbReference type="RefSeq" id="NP_230871.1">
    <property type="nucleotide sequence ID" value="NC_002505.1"/>
</dbReference>
<dbReference type="RefSeq" id="WP_001205535.1">
    <property type="nucleotide sequence ID" value="NZ_LT906614.1"/>
</dbReference>
<dbReference type="SMR" id="Q9KSN0"/>
<dbReference type="STRING" id="243277.VC_1226"/>
<dbReference type="DNASU" id="2614663"/>
<dbReference type="EnsemblBacteria" id="AAF94385">
    <property type="protein sequence ID" value="AAF94385"/>
    <property type="gene ID" value="VC_1226"/>
</dbReference>
<dbReference type="KEGG" id="vch:VC_1226"/>
<dbReference type="PATRIC" id="fig|243277.26.peg.1170"/>
<dbReference type="eggNOG" id="COG0500">
    <property type="taxonomic scope" value="Bacteria"/>
</dbReference>
<dbReference type="HOGENOM" id="CLU_085515_1_0_6"/>
<dbReference type="Proteomes" id="UP000000584">
    <property type="component" value="Chromosome 1"/>
</dbReference>
<dbReference type="GO" id="GO:0005737">
    <property type="term" value="C:cytoplasm"/>
    <property type="evidence" value="ECO:0007669"/>
    <property type="project" value="UniProtKB-SubCell"/>
</dbReference>
<dbReference type="GO" id="GO:0008119">
    <property type="term" value="F:thiopurine S-methyltransferase activity"/>
    <property type="evidence" value="ECO:0000318"/>
    <property type="project" value="GO_Central"/>
</dbReference>
<dbReference type="GO" id="GO:0032259">
    <property type="term" value="P:methylation"/>
    <property type="evidence" value="ECO:0007669"/>
    <property type="project" value="UniProtKB-KW"/>
</dbReference>
<dbReference type="GO" id="GO:0010038">
    <property type="term" value="P:response to metal ion"/>
    <property type="evidence" value="ECO:0007669"/>
    <property type="project" value="InterPro"/>
</dbReference>
<dbReference type="CDD" id="cd02440">
    <property type="entry name" value="AdoMet_MTases"/>
    <property type="match status" value="1"/>
</dbReference>
<dbReference type="FunFam" id="3.40.50.150:FF:000505">
    <property type="entry name" value="Thiopurine S-methyltransferase"/>
    <property type="match status" value="1"/>
</dbReference>
<dbReference type="Gene3D" id="3.40.50.150">
    <property type="entry name" value="Vaccinia Virus protein VP39"/>
    <property type="match status" value="1"/>
</dbReference>
<dbReference type="HAMAP" id="MF_00812">
    <property type="entry name" value="Thiopur_methtran"/>
    <property type="match status" value="1"/>
</dbReference>
<dbReference type="InterPro" id="IPR029063">
    <property type="entry name" value="SAM-dependent_MTases_sf"/>
</dbReference>
<dbReference type="InterPro" id="IPR022474">
    <property type="entry name" value="Thiopur_S-MeTfrase_Se/Te_detox"/>
</dbReference>
<dbReference type="InterPro" id="IPR025835">
    <property type="entry name" value="Thiopurine_S-MeTrfase"/>
</dbReference>
<dbReference type="InterPro" id="IPR008854">
    <property type="entry name" value="TPMT"/>
</dbReference>
<dbReference type="NCBIfam" id="NF009732">
    <property type="entry name" value="PRK13255.1"/>
    <property type="match status" value="1"/>
</dbReference>
<dbReference type="NCBIfam" id="TIGR03840">
    <property type="entry name" value="TMPT_Se_Te"/>
    <property type="match status" value="1"/>
</dbReference>
<dbReference type="PANTHER" id="PTHR10259">
    <property type="entry name" value="THIOPURINE S-METHYLTRANSFERASE"/>
    <property type="match status" value="1"/>
</dbReference>
<dbReference type="PANTHER" id="PTHR10259:SF11">
    <property type="entry name" value="THIOPURINE S-METHYLTRANSFERASE"/>
    <property type="match status" value="1"/>
</dbReference>
<dbReference type="Pfam" id="PF05724">
    <property type="entry name" value="TPMT"/>
    <property type="match status" value="1"/>
</dbReference>
<dbReference type="PIRSF" id="PIRSF023956">
    <property type="entry name" value="Thiopurine_S-methyltransferase"/>
    <property type="match status" value="1"/>
</dbReference>
<dbReference type="SUPFAM" id="SSF53335">
    <property type="entry name" value="S-adenosyl-L-methionine-dependent methyltransferases"/>
    <property type="match status" value="1"/>
</dbReference>
<dbReference type="PROSITE" id="PS51585">
    <property type="entry name" value="SAM_MT_TPMT"/>
    <property type="match status" value="1"/>
</dbReference>
<name>TPMT_VIBCH</name>
<protein>
    <recommendedName>
        <fullName evidence="1">Thiopurine S-methyltransferase</fullName>
        <ecNumber evidence="1">2.1.1.67</ecNumber>
    </recommendedName>
    <alternativeName>
        <fullName evidence="1">Thiopurine methyltransferase</fullName>
    </alternativeName>
</protein>
<gene>
    <name evidence="1" type="primary">tpm</name>
    <name type="ordered locus">VC_1226</name>
</gene>
<comment type="catalytic activity">
    <reaction evidence="1">
        <text>S-adenosyl-L-methionine + a thiopurine = S-adenosyl-L-homocysteine + a thiopurine S-methylether.</text>
        <dbReference type="EC" id="2.1.1.67"/>
    </reaction>
</comment>
<comment type="subcellular location">
    <subcellularLocation>
        <location evidence="1">Cytoplasm</location>
    </subcellularLocation>
</comment>
<comment type="similarity">
    <text evidence="1">Belongs to the class I-like SAM-binding methyltransferase superfamily. TPMT family.</text>
</comment>
<proteinExistence type="inferred from homology"/>
<keyword id="KW-0963">Cytoplasm</keyword>
<keyword id="KW-0489">Methyltransferase</keyword>
<keyword id="KW-1185">Reference proteome</keyword>
<keyword id="KW-0949">S-adenosyl-L-methionine</keyword>
<keyword id="KW-0808">Transferase</keyword>
<reference key="1">
    <citation type="journal article" date="2000" name="Nature">
        <title>DNA sequence of both chromosomes of the cholera pathogen Vibrio cholerae.</title>
        <authorList>
            <person name="Heidelberg J.F."/>
            <person name="Eisen J.A."/>
            <person name="Nelson W.C."/>
            <person name="Clayton R.A."/>
            <person name="Gwinn M.L."/>
            <person name="Dodson R.J."/>
            <person name="Haft D.H."/>
            <person name="Hickey E.K."/>
            <person name="Peterson J.D."/>
            <person name="Umayam L.A."/>
            <person name="Gill S.R."/>
            <person name="Nelson K.E."/>
            <person name="Read T.D."/>
            <person name="Tettelin H."/>
            <person name="Richardson D.L."/>
            <person name="Ermolaeva M.D."/>
            <person name="Vamathevan J.J."/>
            <person name="Bass S."/>
            <person name="Qin H."/>
            <person name="Dragoi I."/>
            <person name="Sellers P."/>
            <person name="McDonald L.A."/>
            <person name="Utterback T.R."/>
            <person name="Fleischmann R.D."/>
            <person name="Nierman W.C."/>
            <person name="White O."/>
            <person name="Salzberg S.L."/>
            <person name="Smith H.O."/>
            <person name="Colwell R.R."/>
            <person name="Mekalanos J.J."/>
            <person name="Venter J.C."/>
            <person name="Fraser C.M."/>
        </authorList>
    </citation>
    <scope>NUCLEOTIDE SEQUENCE [LARGE SCALE GENOMIC DNA]</scope>
    <source>
        <strain>ATCC 39315 / El Tor Inaba N16961</strain>
    </source>
</reference>